<protein>
    <recommendedName>
        <fullName evidence="1">Large ribosomal subunit protein uL13</fullName>
    </recommendedName>
    <alternativeName>
        <fullName evidence="2">50S ribosomal protein L13</fullName>
    </alternativeName>
</protein>
<feature type="chain" id="PRO_0000223980" description="Large ribosomal subunit protein uL13">
    <location>
        <begin position="1"/>
        <end position="145"/>
    </location>
</feature>
<accession>Q5HM31</accession>
<keyword id="KW-1185">Reference proteome</keyword>
<keyword id="KW-0687">Ribonucleoprotein</keyword>
<keyword id="KW-0689">Ribosomal protein</keyword>
<evidence type="ECO:0000255" key="1">
    <source>
        <dbReference type="HAMAP-Rule" id="MF_01366"/>
    </source>
</evidence>
<evidence type="ECO:0000305" key="2"/>
<name>RL13_STAEQ</name>
<sequence length="145" mass="16335">MRQTFMANESNIERKWYVIDAEGQTLGRLSSEVAAILRGKNKVTYTPHVDTGDYVIIINASKIEFTGNKEQDKMYYRHSNHPGGLKSISAGELKRTNPERLLETSIKGMLPSTRLGEKQGKKLFVYGGAEHPHAAQQPENYELRG</sequence>
<gene>
    <name evidence="1" type="primary">rplM</name>
    <name type="ordered locus">SERP1799</name>
</gene>
<organism>
    <name type="scientific">Staphylococcus epidermidis (strain ATCC 35984 / DSM 28319 / BCRC 17069 / CCUG 31568 / BM 3577 / RP62A)</name>
    <dbReference type="NCBI Taxonomy" id="176279"/>
    <lineage>
        <taxon>Bacteria</taxon>
        <taxon>Bacillati</taxon>
        <taxon>Bacillota</taxon>
        <taxon>Bacilli</taxon>
        <taxon>Bacillales</taxon>
        <taxon>Staphylococcaceae</taxon>
        <taxon>Staphylococcus</taxon>
    </lineage>
</organism>
<reference key="1">
    <citation type="journal article" date="2005" name="J. Bacteriol.">
        <title>Insights on evolution of virulence and resistance from the complete genome analysis of an early methicillin-resistant Staphylococcus aureus strain and a biofilm-producing methicillin-resistant Staphylococcus epidermidis strain.</title>
        <authorList>
            <person name="Gill S.R."/>
            <person name="Fouts D.E."/>
            <person name="Archer G.L."/>
            <person name="Mongodin E.F."/>
            <person name="DeBoy R.T."/>
            <person name="Ravel J."/>
            <person name="Paulsen I.T."/>
            <person name="Kolonay J.F."/>
            <person name="Brinkac L.M."/>
            <person name="Beanan M.J."/>
            <person name="Dodson R.J."/>
            <person name="Daugherty S.C."/>
            <person name="Madupu R."/>
            <person name="Angiuoli S.V."/>
            <person name="Durkin A.S."/>
            <person name="Haft D.H."/>
            <person name="Vamathevan J.J."/>
            <person name="Khouri H."/>
            <person name="Utterback T.R."/>
            <person name="Lee C."/>
            <person name="Dimitrov G."/>
            <person name="Jiang L."/>
            <person name="Qin H."/>
            <person name="Weidman J."/>
            <person name="Tran K."/>
            <person name="Kang K.H."/>
            <person name="Hance I.R."/>
            <person name="Nelson K.E."/>
            <person name="Fraser C.M."/>
        </authorList>
    </citation>
    <scope>NUCLEOTIDE SEQUENCE [LARGE SCALE GENOMIC DNA]</scope>
    <source>
        <strain>ATCC 35984 / DSM 28319 / BCRC 17069 / CCUG 31568 / BM 3577 / RP62A</strain>
    </source>
</reference>
<proteinExistence type="inferred from homology"/>
<comment type="function">
    <text evidence="1">This protein is one of the early assembly proteins of the 50S ribosomal subunit, although it is not seen to bind rRNA by itself. It is important during the early stages of 50S assembly.</text>
</comment>
<comment type="subunit">
    <text evidence="1">Part of the 50S ribosomal subunit.</text>
</comment>
<comment type="similarity">
    <text evidence="1">Belongs to the universal ribosomal protein uL13 family.</text>
</comment>
<dbReference type="EMBL" id="CP000029">
    <property type="protein sequence ID" value="AAW55192.1"/>
    <property type="molecule type" value="Genomic_DNA"/>
</dbReference>
<dbReference type="RefSeq" id="WP_002469355.1">
    <property type="nucleotide sequence ID" value="NC_002976.3"/>
</dbReference>
<dbReference type="SMR" id="Q5HM31"/>
<dbReference type="STRING" id="176279.SERP1799"/>
<dbReference type="GeneID" id="50018105"/>
<dbReference type="KEGG" id="ser:SERP1799"/>
<dbReference type="eggNOG" id="COG0102">
    <property type="taxonomic scope" value="Bacteria"/>
</dbReference>
<dbReference type="HOGENOM" id="CLU_082184_2_2_9"/>
<dbReference type="Proteomes" id="UP000000531">
    <property type="component" value="Chromosome"/>
</dbReference>
<dbReference type="GO" id="GO:0022625">
    <property type="term" value="C:cytosolic large ribosomal subunit"/>
    <property type="evidence" value="ECO:0007669"/>
    <property type="project" value="TreeGrafter"/>
</dbReference>
<dbReference type="GO" id="GO:0003729">
    <property type="term" value="F:mRNA binding"/>
    <property type="evidence" value="ECO:0007669"/>
    <property type="project" value="TreeGrafter"/>
</dbReference>
<dbReference type="GO" id="GO:0003735">
    <property type="term" value="F:structural constituent of ribosome"/>
    <property type="evidence" value="ECO:0007669"/>
    <property type="project" value="InterPro"/>
</dbReference>
<dbReference type="GO" id="GO:0017148">
    <property type="term" value="P:negative regulation of translation"/>
    <property type="evidence" value="ECO:0007669"/>
    <property type="project" value="TreeGrafter"/>
</dbReference>
<dbReference type="GO" id="GO:0006412">
    <property type="term" value="P:translation"/>
    <property type="evidence" value="ECO:0007669"/>
    <property type="project" value="UniProtKB-UniRule"/>
</dbReference>
<dbReference type="CDD" id="cd00392">
    <property type="entry name" value="Ribosomal_L13"/>
    <property type="match status" value="1"/>
</dbReference>
<dbReference type="FunFam" id="3.90.1180.10:FF:000001">
    <property type="entry name" value="50S ribosomal protein L13"/>
    <property type="match status" value="1"/>
</dbReference>
<dbReference type="Gene3D" id="3.90.1180.10">
    <property type="entry name" value="Ribosomal protein L13"/>
    <property type="match status" value="1"/>
</dbReference>
<dbReference type="HAMAP" id="MF_01366">
    <property type="entry name" value="Ribosomal_uL13"/>
    <property type="match status" value="1"/>
</dbReference>
<dbReference type="InterPro" id="IPR005822">
    <property type="entry name" value="Ribosomal_uL13"/>
</dbReference>
<dbReference type="InterPro" id="IPR005823">
    <property type="entry name" value="Ribosomal_uL13_bac-type"/>
</dbReference>
<dbReference type="InterPro" id="IPR023563">
    <property type="entry name" value="Ribosomal_uL13_CS"/>
</dbReference>
<dbReference type="InterPro" id="IPR036899">
    <property type="entry name" value="Ribosomal_uL13_sf"/>
</dbReference>
<dbReference type="NCBIfam" id="TIGR01066">
    <property type="entry name" value="rplM_bact"/>
    <property type="match status" value="1"/>
</dbReference>
<dbReference type="PANTHER" id="PTHR11545:SF2">
    <property type="entry name" value="LARGE RIBOSOMAL SUBUNIT PROTEIN UL13M"/>
    <property type="match status" value="1"/>
</dbReference>
<dbReference type="PANTHER" id="PTHR11545">
    <property type="entry name" value="RIBOSOMAL PROTEIN L13"/>
    <property type="match status" value="1"/>
</dbReference>
<dbReference type="Pfam" id="PF00572">
    <property type="entry name" value="Ribosomal_L13"/>
    <property type="match status" value="1"/>
</dbReference>
<dbReference type="PIRSF" id="PIRSF002181">
    <property type="entry name" value="Ribosomal_L13"/>
    <property type="match status" value="1"/>
</dbReference>
<dbReference type="SUPFAM" id="SSF52161">
    <property type="entry name" value="Ribosomal protein L13"/>
    <property type="match status" value="1"/>
</dbReference>
<dbReference type="PROSITE" id="PS00783">
    <property type="entry name" value="RIBOSOMAL_L13"/>
    <property type="match status" value="1"/>
</dbReference>